<sequence length="202" mass="21991">MAKYQTIEAAVRSEFGKGSARRARVAGQIPAVVYGADVESNLHVTVDHRTFAALVRQEGVNAVLELDIEGQKHLTMIKHIDQNVLTFNIDHLDLLAIKRGEKVEVDVPVIVEGEPAPGTMWVQDADTIKVEADVLSIPEEFKVSIEGLEFGAQVTAADIELDGDTTLVEDPETLIVNIVYPEVEAEETEDDEAASEGEEAAE</sequence>
<comment type="function">
    <text evidence="1">This is one of the proteins that binds to the 5S RNA in the ribosome where it forms part of the central protuberance.</text>
</comment>
<comment type="subunit">
    <text evidence="1">Part of the 50S ribosomal subunit; part of the 5S rRNA/L5/L18/L25 subcomplex. Contacts the 5S rRNA. Binds to the 5S rRNA independently of L5 and L18.</text>
</comment>
<comment type="similarity">
    <text evidence="1">Belongs to the bacterial ribosomal protein bL25 family. CTC subfamily.</text>
</comment>
<accession>A4QCR9</accession>
<proteinExistence type="inferred from homology"/>
<dbReference type="EMBL" id="AP009044">
    <property type="protein sequence ID" value="BAF54016.1"/>
    <property type="molecule type" value="Genomic_DNA"/>
</dbReference>
<dbReference type="RefSeq" id="WP_003856695.1">
    <property type="nucleotide sequence ID" value="NC_009342.1"/>
</dbReference>
<dbReference type="SMR" id="A4QCR9"/>
<dbReference type="KEGG" id="cgt:cgR_1040"/>
<dbReference type="HOGENOM" id="CLU_075939_1_0_11"/>
<dbReference type="PhylomeDB" id="A4QCR9"/>
<dbReference type="Proteomes" id="UP000006698">
    <property type="component" value="Chromosome"/>
</dbReference>
<dbReference type="GO" id="GO:0022625">
    <property type="term" value="C:cytosolic large ribosomal subunit"/>
    <property type="evidence" value="ECO:0007669"/>
    <property type="project" value="TreeGrafter"/>
</dbReference>
<dbReference type="GO" id="GO:0008097">
    <property type="term" value="F:5S rRNA binding"/>
    <property type="evidence" value="ECO:0007669"/>
    <property type="project" value="InterPro"/>
</dbReference>
<dbReference type="GO" id="GO:0003735">
    <property type="term" value="F:structural constituent of ribosome"/>
    <property type="evidence" value="ECO:0007669"/>
    <property type="project" value="InterPro"/>
</dbReference>
<dbReference type="GO" id="GO:0006412">
    <property type="term" value="P:translation"/>
    <property type="evidence" value="ECO:0007669"/>
    <property type="project" value="UniProtKB-UniRule"/>
</dbReference>
<dbReference type="CDD" id="cd00495">
    <property type="entry name" value="Ribosomal_L25_TL5_CTC"/>
    <property type="match status" value="1"/>
</dbReference>
<dbReference type="Gene3D" id="2.170.120.20">
    <property type="entry name" value="Ribosomal protein L25, beta domain"/>
    <property type="match status" value="1"/>
</dbReference>
<dbReference type="Gene3D" id="2.40.240.10">
    <property type="entry name" value="Ribosomal Protein L25, Chain P"/>
    <property type="match status" value="1"/>
</dbReference>
<dbReference type="HAMAP" id="MF_01334">
    <property type="entry name" value="Ribosomal_bL25_CTC"/>
    <property type="match status" value="1"/>
</dbReference>
<dbReference type="InterPro" id="IPR020056">
    <property type="entry name" value="Rbsml_bL25/Gln-tRNA_synth_N"/>
</dbReference>
<dbReference type="InterPro" id="IPR011035">
    <property type="entry name" value="Ribosomal_bL25/Gln-tRNA_synth"/>
</dbReference>
<dbReference type="InterPro" id="IPR020057">
    <property type="entry name" value="Ribosomal_bL25_b-dom"/>
</dbReference>
<dbReference type="InterPro" id="IPR037121">
    <property type="entry name" value="Ribosomal_bL25_C"/>
</dbReference>
<dbReference type="InterPro" id="IPR001021">
    <property type="entry name" value="Ribosomal_bL25_long"/>
</dbReference>
<dbReference type="InterPro" id="IPR029751">
    <property type="entry name" value="Ribosomal_L25_dom"/>
</dbReference>
<dbReference type="InterPro" id="IPR020930">
    <property type="entry name" value="Ribosomal_uL5_bac-type"/>
</dbReference>
<dbReference type="NCBIfam" id="TIGR00731">
    <property type="entry name" value="bL25_bact_ctc"/>
    <property type="match status" value="1"/>
</dbReference>
<dbReference type="NCBIfam" id="NF004131">
    <property type="entry name" value="PRK05618.2-1"/>
    <property type="match status" value="1"/>
</dbReference>
<dbReference type="PANTHER" id="PTHR33284">
    <property type="entry name" value="RIBOSOMAL PROTEIN L25/GLN-TRNA SYNTHETASE, ANTI-CODON-BINDING DOMAIN-CONTAINING PROTEIN"/>
    <property type="match status" value="1"/>
</dbReference>
<dbReference type="PANTHER" id="PTHR33284:SF1">
    <property type="entry name" value="RIBOSOMAL PROTEIN L25_GLN-TRNA SYNTHETASE, ANTI-CODON-BINDING DOMAIN-CONTAINING PROTEIN"/>
    <property type="match status" value="1"/>
</dbReference>
<dbReference type="Pfam" id="PF01386">
    <property type="entry name" value="Ribosomal_L25p"/>
    <property type="match status" value="1"/>
</dbReference>
<dbReference type="Pfam" id="PF14693">
    <property type="entry name" value="Ribosomal_TL5_C"/>
    <property type="match status" value="1"/>
</dbReference>
<dbReference type="SUPFAM" id="SSF50715">
    <property type="entry name" value="Ribosomal protein L25-like"/>
    <property type="match status" value="1"/>
</dbReference>
<evidence type="ECO:0000255" key="1">
    <source>
        <dbReference type="HAMAP-Rule" id="MF_01334"/>
    </source>
</evidence>
<evidence type="ECO:0000256" key="2">
    <source>
        <dbReference type="SAM" id="MobiDB-lite"/>
    </source>
</evidence>
<evidence type="ECO:0000305" key="3"/>
<name>RL25_CORGB</name>
<reference key="1">
    <citation type="journal article" date="2007" name="Microbiology">
        <title>Comparative analysis of the Corynebacterium glutamicum group and complete genome sequence of strain R.</title>
        <authorList>
            <person name="Yukawa H."/>
            <person name="Omumasaba C.A."/>
            <person name="Nonaka H."/>
            <person name="Kos P."/>
            <person name="Okai N."/>
            <person name="Suzuki N."/>
            <person name="Suda M."/>
            <person name="Tsuge Y."/>
            <person name="Watanabe J."/>
            <person name="Ikeda Y."/>
            <person name="Vertes A.A."/>
            <person name="Inui M."/>
        </authorList>
    </citation>
    <scope>NUCLEOTIDE SEQUENCE [LARGE SCALE GENOMIC DNA]</scope>
    <source>
        <strain>R</strain>
    </source>
</reference>
<feature type="chain" id="PRO_1000052884" description="Large ribosomal subunit protein bL25">
    <location>
        <begin position="1"/>
        <end position="202"/>
    </location>
</feature>
<feature type="region of interest" description="Disordered" evidence="2">
    <location>
        <begin position="182"/>
        <end position="202"/>
    </location>
</feature>
<feature type="compositionally biased region" description="Acidic residues" evidence="2">
    <location>
        <begin position="183"/>
        <end position="202"/>
    </location>
</feature>
<protein>
    <recommendedName>
        <fullName evidence="1">Large ribosomal subunit protein bL25</fullName>
    </recommendedName>
    <alternativeName>
        <fullName evidence="3">50S ribosomal protein L25</fullName>
    </alternativeName>
    <alternativeName>
        <fullName evidence="1">General stress protein CTC</fullName>
    </alternativeName>
</protein>
<organism>
    <name type="scientific">Corynebacterium glutamicum (strain R)</name>
    <dbReference type="NCBI Taxonomy" id="340322"/>
    <lineage>
        <taxon>Bacteria</taxon>
        <taxon>Bacillati</taxon>
        <taxon>Actinomycetota</taxon>
        <taxon>Actinomycetes</taxon>
        <taxon>Mycobacteriales</taxon>
        <taxon>Corynebacteriaceae</taxon>
        <taxon>Corynebacterium</taxon>
    </lineage>
</organism>
<gene>
    <name evidence="1" type="primary">rplY</name>
    <name evidence="1" type="synonym">ctc</name>
    <name type="ordered locus">cgR_1040</name>
</gene>
<keyword id="KW-0687">Ribonucleoprotein</keyword>
<keyword id="KW-0689">Ribosomal protein</keyword>
<keyword id="KW-0694">RNA-binding</keyword>
<keyword id="KW-0699">rRNA-binding</keyword>